<feature type="chain" id="PRO_1000012938" description="Lysine--tRNA ligase">
    <location>
        <begin position="1"/>
        <end position="498"/>
    </location>
</feature>
<feature type="binding site" evidence="1">
    <location>
        <position position="407"/>
    </location>
    <ligand>
        <name>Mg(2+)</name>
        <dbReference type="ChEBI" id="CHEBI:18420"/>
        <label>1</label>
    </ligand>
</feature>
<feature type="binding site" evidence="1">
    <location>
        <position position="414"/>
    </location>
    <ligand>
        <name>Mg(2+)</name>
        <dbReference type="ChEBI" id="CHEBI:18420"/>
        <label>1</label>
    </ligand>
</feature>
<feature type="binding site" evidence="1">
    <location>
        <position position="414"/>
    </location>
    <ligand>
        <name>Mg(2+)</name>
        <dbReference type="ChEBI" id="CHEBI:18420"/>
        <label>2</label>
    </ligand>
</feature>
<protein>
    <recommendedName>
        <fullName evidence="1">Lysine--tRNA ligase</fullName>
        <ecNumber evidence="1">6.1.1.6</ecNumber>
    </recommendedName>
    <alternativeName>
        <fullName evidence="1">Lysyl-tRNA synthetase</fullName>
        <shortName evidence="1">LysRS</shortName>
    </alternativeName>
</protein>
<sequence>MTDKTENSGLSSDATEVRAQKLKLLREQIGDVYPAHFHRTMTNAELAEKYQDLAPDTETQDLVTVAGRVYSSRNSGMFMDIHDASGKIQVFSHKDTTPEEARGLLPMIDLGDVIGVTGLVRRTKRGELTINAQQITMLTKSLLPMPEKYHGLADIETRYRKRYLDIMVNEESKLRFQQRSRIVSSLRRFLEDEGFMEVETPMLQPIYGGATAEPFKTHHNTLKLDMYLRIAPELYLKRVLVSGLTDKVFEINRNFRNEGVSTRHNPEFTMMECYWAYADYEDVMGLVERMFETLALAVHGTTEFEFGDKQLSFKGPFPRVSMPAAVKDATGIDFLAIKSDEEARQAARDAGVEIEKDATWGEVLAFLFEEKVEATLIQPAHVIHFPKDISPFAKEVPGEPRLVERFETYCNGWEIGNAFSELNDPVEQRARMVEQMEQAHARGEKEKTLDEDFLDAMDQGMPPAGGLGIGVDRLIMLLTNSPSIRDIILFPARRHKSD</sequence>
<evidence type="ECO:0000255" key="1">
    <source>
        <dbReference type="HAMAP-Rule" id="MF_00252"/>
    </source>
</evidence>
<keyword id="KW-0030">Aminoacyl-tRNA synthetase</keyword>
<keyword id="KW-0067">ATP-binding</keyword>
<keyword id="KW-0963">Cytoplasm</keyword>
<keyword id="KW-0436">Ligase</keyword>
<keyword id="KW-0460">Magnesium</keyword>
<keyword id="KW-0479">Metal-binding</keyword>
<keyword id="KW-0547">Nucleotide-binding</keyword>
<keyword id="KW-0648">Protein biosynthesis</keyword>
<reference key="1">
    <citation type="submission" date="2007-06" db="EMBL/GenBank/DDBJ databases">
        <title>Complete sequence of Sinorhizobium medicae WSM419 chromosome.</title>
        <authorList>
            <consortium name="US DOE Joint Genome Institute"/>
            <person name="Copeland A."/>
            <person name="Lucas S."/>
            <person name="Lapidus A."/>
            <person name="Barry K."/>
            <person name="Glavina del Rio T."/>
            <person name="Dalin E."/>
            <person name="Tice H."/>
            <person name="Pitluck S."/>
            <person name="Chain P."/>
            <person name="Malfatti S."/>
            <person name="Shin M."/>
            <person name="Vergez L."/>
            <person name="Schmutz J."/>
            <person name="Larimer F."/>
            <person name="Land M."/>
            <person name="Hauser L."/>
            <person name="Kyrpides N."/>
            <person name="Mikhailova N."/>
            <person name="Reeve W.G."/>
            <person name="Richardson P."/>
        </authorList>
    </citation>
    <scope>NUCLEOTIDE SEQUENCE [LARGE SCALE GENOMIC DNA]</scope>
    <source>
        <strain>WSM419</strain>
    </source>
</reference>
<organism>
    <name type="scientific">Sinorhizobium medicae (strain WSM419)</name>
    <name type="common">Ensifer medicae</name>
    <dbReference type="NCBI Taxonomy" id="366394"/>
    <lineage>
        <taxon>Bacteria</taxon>
        <taxon>Pseudomonadati</taxon>
        <taxon>Pseudomonadota</taxon>
        <taxon>Alphaproteobacteria</taxon>
        <taxon>Hyphomicrobiales</taxon>
        <taxon>Rhizobiaceae</taxon>
        <taxon>Sinorhizobium/Ensifer group</taxon>
        <taxon>Sinorhizobium</taxon>
    </lineage>
</organism>
<comment type="catalytic activity">
    <reaction evidence="1">
        <text>tRNA(Lys) + L-lysine + ATP = L-lysyl-tRNA(Lys) + AMP + diphosphate</text>
        <dbReference type="Rhea" id="RHEA:20792"/>
        <dbReference type="Rhea" id="RHEA-COMP:9696"/>
        <dbReference type="Rhea" id="RHEA-COMP:9697"/>
        <dbReference type="ChEBI" id="CHEBI:30616"/>
        <dbReference type="ChEBI" id="CHEBI:32551"/>
        <dbReference type="ChEBI" id="CHEBI:33019"/>
        <dbReference type="ChEBI" id="CHEBI:78442"/>
        <dbReference type="ChEBI" id="CHEBI:78529"/>
        <dbReference type="ChEBI" id="CHEBI:456215"/>
        <dbReference type="EC" id="6.1.1.6"/>
    </reaction>
</comment>
<comment type="cofactor">
    <cofactor evidence="1">
        <name>Mg(2+)</name>
        <dbReference type="ChEBI" id="CHEBI:18420"/>
    </cofactor>
    <text evidence="1">Binds 3 Mg(2+) ions per subunit.</text>
</comment>
<comment type="subunit">
    <text evidence="1">Homodimer.</text>
</comment>
<comment type="subcellular location">
    <subcellularLocation>
        <location evidence="1">Cytoplasm</location>
    </subcellularLocation>
</comment>
<comment type="similarity">
    <text evidence="1">Belongs to the class-II aminoacyl-tRNA synthetase family.</text>
</comment>
<gene>
    <name evidence="1" type="primary">lysS</name>
    <name type="ordered locus">Smed_2800</name>
</gene>
<proteinExistence type="inferred from homology"/>
<dbReference type="EC" id="6.1.1.6" evidence="1"/>
<dbReference type="EMBL" id="CP000738">
    <property type="protein sequence ID" value="ABR61630.1"/>
    <property type="molecule type" value="Genomic_DNA"/>
</dbReference>
<dbReference type="RefSeq" id="WP_012067015.1">
    <property type="nucleotide sequence ID" value="NC_009636.1"/>
</dbReference>
<dbReference type="RefSeq" id="YP_001328465.1">
    <property type="nucleotide sequence ID" value="NC_009636.1"/>
</dbReference>
<dbReference type="SMR" id="A6UDA0"/>
<dbReference type="STRING" id="366394.Smed_2800"/>
<dbReference type="GeneID" id="61611668"/>
<dbReference type="KEGG" id="smd:Smed_2800"/>
<dbReference type="PATRIC" id="fig|366394.8.peg.6007"/>
<dbReference type="eggNOG" id="COG1190">
    <property type="taxonomic scope" value="Bacteria"/>
</dbReference>
<dbReference type="HOGENOM" id="CLU_008255_6_0_5"/>
<dbReference type="OrthoDB" id="9801152at2"/>
<dbReference type="Proteomes" id="UP000001108">
    <property type="component" value="Chromosome"/>
</dbReference>
<dbReference type="GO" id="GO:0005829">
    <property type="term" value="C:cytosol"/>
    <property type="evidence" value="ECO:0007669"/>
    <property type="project" value="TreeGrafter"/>
</dbReference>
<dbReference type="GO" id="GO:0005524">
    <property type="term" value="F:ATP binding"/>
    <property type="evidence" value="ECO:0007669"/>
    <property type="project" value="UniProtKB-UniRule"/>
</dbReference>
<dbReference type="GO" id="GO:0004824">
    <property type="term" value="F:lysine-tRNA ligase activity"/>
    <property type="evidence" value="ECO:0007669"/>
    <property type="project" value="UniProtKB-UniRule"/>
</dbReference>
<dbReference type="GO" id="GO:0000287">
    <property type="term" value="F:magnesium ion binding"/>
    <property type="evidence" value="ECO:0007669"/>
    <property type="project" value="UniProtKB-UniRule"/>
</dbReference>
<dbReference type="GO" id="GO:0000049">
    <property type="term" value="F:tRNA binding"/>
    <property type="evidence" value="ECO:0007669"/>
    <property type="project" value="TreeGrafter"/>
</dbReference>
<dbReference type="GO" id="GO:0006430">
    <property type="term" value="P:lysyl-tRNA aminoacylation"/>
    <property type="evidence" value="ECO:0007669"/>
    <property type="project" value="UniProtKB-UniRule"/>
</dbReference>
<dbReference type="CDD" id="cd00775">
    <property type="entry name" value="LysRS_core"/>
    <property type="match status" value="1"/>
</dbReference>
<dbReference type="CDD" id="cd04322">
    <property type="entry name" value="LysRS_N"/>
    <property type="match status" value="1"/>
</dbReference>
<dbReference type="Gene3D" id="3.30.930.10">
    <property type="entry name" value="Bira Bifunctional Protein, Domain 2"/>
    <property type="match status" value="1"/>
</dbReference>
<dbReference type="Gene3D" id="2.40.50.140">
    <property type="entry name" value="Nucleic acid-binding proteins"/>
    <property type="match status" value="1"/>
</dbReference>
<dbReference type="HAMAP" id="MF_00252">
    <property type="entry name" value="Lys_tRNA_synth_class2"/>
    <property type="match status" value="1"/>
</dbReference>
<dbReference type="InterPro" id="IPR004364">
    <property type="entry name" value="Aa-tRNA-synt_II"/>
</dbReference>
<dbReference type="InterPro" id="IPR006195">
    <property type="entry name" value="aa-tRNA-synth_II"/>
</dbReference>
<dbReference type="InterPro" id="IPR045864">
    <property type="entry name" value="aa-tRNA-synth_II/BPL/LPL"/>
</dbReference>
<dbReference type="InterPro" id="IPR002313">
    <property type="entry name" value="Lys-tRNA-ligase_II"/>
</dbReference>
<dbReference type="InterPro" id="IPR044136">
    <property type="entry name" value="Lys-tRNA-ligase_II_N"/>
</dbReference>
<dbReference type="InterPro" id="IPR018149">
    <property type="entry name" value="Lys-tRNA-synth_II_C"/>
</dbReference>
<dbReference type="InterPro" id="IPR012340">
    <property type="entry name" value="NA-bd_OB-fold"/>
</dbReference>
<dbReference type="InterPro" id="IPR004365">
    <property type="entry name" value="NA-bd_OB_tRNA"/>
</dbReference>
<dbReference type="NCBIfam" id="TIGR00499">
    <property type="entry name" value="lysS_bact"/>
    <property type="match status" value="1"/>
</dbReference>
<dbReference type="NCBIfam" id="NF001756">
    <property type="entry name" value="PRK00484.1"/>
    <property type="match status" value="1"/>
</dbReference>
<dbReference type="PANTHER" id="PTHR42918:SF15">
    <property type="entry name" value="LYSINE--TRNA LIGASE, CHLOROPLASTIC_MITOCHONDRIAL"/>
    <property type="match status" value="1"/>
</dbReference>
<dbReference type="PANTHER" id="PTHR42918">
    <property type="entry name" value="LYSYL-TRNA SYNTHETASE"/>
    <property type="match status" value="1"/>
</dbReference>
<dbReference type="Pfam" id="PF00152">
    <property type="entry name" value="tRNA-synt_2"/>
    <property type="match status" value="1"/>
</dbReference>
<dbReference type="Pfam" id="PF01336">
    <property type="entry name" value="tRNA_anti-codon"/>
    <property type="match status" value="1"/>
</dbReference>
<dbReference type="PRINTS" id="PR00982">
    <property type="entry name" value="TRNASYNTHLYS"/>
</dbReference>
<dbReference type="SUPFAM" id="SSF55681">
    <property type="entry name" value="Class II aaRS and biotin synthetases"/>
    <property type="match status" value="1"/>
</dbReference>
<dbReference type="SUPFAM" id="SSF50249">
    <property type="entry name" value="Nucleic acid-binding proteins"/>
    <property type="match status" value="1"/>
</dbReference>
<dbReference type="PROSITE" id="PS50862">
    <property type="entry name" value="AA_TRNA_LIGASE_II"/>
    <property type="match status" value="1"/>
</dbReference>
<accession>A6UDA0</accession>
<name>SYK_SINMW</name>